<evidence type="ECO:0000255" key="1">
    <source>
        <dbReference type="HAMAP-Rule" id="MF_01595"/>
    </source>
</evidence>
<reference key="1">
    <citation type="journal article" date="2004" name="Nat. Biotechnol.">
        <title>The genome sequence of the capnophilic rumen bacterium Mannheimia succiniciproducens.</title>
        <authorList>
            <person name="Hong S.H."/>
            <person name="Kim J.S."/>
            <person name="Lee S.Y."/>
            <person name="In Y.H."/>
            <person name="Choi S.S."/>
            <person name="Rih J.-K."/>
            <person name="Kim C.H."/>
            <person name="Jeong H."/>
            <person name="Hur C.G."/>
            <person name="Kim J.J."/>
        </authorList>
    </citation>
    <scope>NUCLEOTIDE SEQUENCE [LARGE SCALE GENOMIC DNA]</scope>
    <source>
        <strain>KCTC 0769BP / MBEL55E</strain>
    </source>
</reference>
<proteinExistence type="inferred from homology"/>
<gene>
    <name evidence="1" type="primary">pnp</name>
    <name type="ordered locus">MS0493</name>
</gene>
<keyword id="KW-0963">Cytoplasm</keyword>
<keyword id="KW-0460">Magnesium</keyword>
<keyword id="KW-0479">Metal-binding</keyword>
<keyword id="KW-0548">Nucleotidyltransferase</keyword>
<keyword id="KW-0694">RNA-binding</keyword>
<keyword id="KW-0808">Transferase</keyword>
<name>PNP_MANSM</name>
<dbReference type="EC" id="2.7.7.8" evidence="1"/>
<dbReference type="EMBL" id="AE016827">
    <property type="protein sequence ID" value="AAU37100.1"/>
    <property type="molecule type" value="Genomic_DNA"/>
</dbReference>
<dbReference type="RefSeq" id="WP_011199672.1">
    <property type="nucleotide sequence ID" value="NC_006300.1"/>
</dbReference>
<dbReference type="SMR" id="Q65VB0"/>
<dbReference type="STRING" id="221988.MS0493"/>
<dbReference type="KEGG" id="msu:MS0493"/>
<dbReference type="eggNOG" id="COG1185">
    <property type="taxonomic scope" value="Bacteria"/>
</dbReference>
<dbReference type="HOGENOM" id="CLU_004217_2_2_6"/>
<dbReference type="OrthoDB" id="9804305at2"/>
<dbReference type="Proteomes" id="UP000000607">
    <property type="component" value="Chromosome"/>
</dbReference>
<dbReference type="GO" id="GO:0005829">
    <property type="term" value="C:cytosol"/>
    <property type="evidence" value="ECO:0007669"/>
    <property type="project" value="TreeGrafter"/>
</dbReference>
<dbReference type="GO" id="GO:0000175">
    <property type="term" value="F:3'-5'-RNA exonuclease activity"/>
    <property type="evidence" value="ECO:0007669"/>
    <property type="project" value="TreeGrafter"/>
</dbReference>
<dbReference type="GO" id="GO:0000287">
    <property type="term" value="F:magnesium ion binding"/>
    <property type="evidence" value="ECO:0007669"/>
    <property type="project" value="UniProtKB-UniRule"/>
</dbReference>
<dbReference type="GO" id="GO:0004654">
    <property type="term" value="F:polyribonucleotide nucleotidyltransferase activity"/>
    <property type="evidence" value="ECO:0007669"/>
    <property type="project" value="UniProtKB-UniRule"/>
</dbReference>
<dbReference type="GO" id="GO:0003723">
    <property type="term" value="F:RNA binding"/>
    <property type="evidence" value="ECO:0007669"/>
    <property type="project" value="UniProtKB-UniRule"/>
</dbReference>
<dbReference type="GO" id="GO:0006402">
    <property type="term" value="P:mRNA catabolic process"/>
    <property type="evidence" value="ECO:0007669"/>
    <property type="project" value="UniProtKB-UniRule"/>
</dbReference>
<dbReference type="GO" id="GO:0006396">
    <property type="term" value="P:RNA processing"/>
    <property type="evidence" value="ECO:0007669"/>
    <property type="project" value="InterPro"/>
</dbReference>
<dbReference type="CDD" id="cd02393">
    <property type="entry name" value="KH-I_PNPase"/>
    <property type="match status" value="1"/>
</dbReference>
<dbReference type="CDD" id="cd11363">
    <property type="entry name" value="RNase_PH_PNPase_1"/>
    <property type="match status" value="1"/>
</dbReference>
<dbReference type="CDD" id="cd11364">
    <property type="entry name" value="RNase_PH_PNPase_2"/>
    <property type="match status" value="1"/>
</dbReference>
<dbReference type="CDD" id="cd04472">
    <property type="entry name" value="S1_PNPase"/>
    <property type="match status" value="1"/>
</dbReference>
<dbReference type="FunFam" id="2.40.50.140:FF:000023">
    <property type="entry name" value="Polyribonucleotide nucleotidyltransferase"/>
    <property type="match status" value="1"/>
</dbReference>
<dbReference type="FunFam" id="3.30.1370.10:FF:000001">
    <property type="entry name" value="Polyribonucleotide nucleotidyltransferase"/>
    <property type="match status" value="1"/>
</dbReference>
<dbReference type="FunFam" id="3.30.230.70:FF:000001">
    <property type="entry name" value="Polyribonucleotide nucleotidyltransferase"/>
    <property type="match status" value="1"/>
</dbReference>
<dbReference type="FunFam" id="3.30.230.70:FF:000002">
    <property type="entry name" value="Polyribonucleotide nucleotidyltransferase"/>
    <property type="match status" value="1"/>
</dbReference>
<dbReference type="Gene3D" id="3.30.230.70">
    <property type="entry name" value="GHMP Kinase, N-terminal domain"/>
    <property type="match status" value="2"/>
</dbReference>
<dbReference type="Gene3D" id="3.30.1370.10">
    <property type="entry name" value="K Homology domain, type 1"/>
    <property type="match status" value="1"/>
</dbReference>
<dbReference type="Gene3D" id="2.40.50.140">
    <property type="entry name" value="Nucleic acid-binding proteins"/>
    <property type="match status" value="1"/>
</dbReference>
<dbReference type="HAMAP" id="MF_01595">
    <property type="entry name" value="PNPase"/>
    <property type="match status" value="1"/>
</dbReference>
<dbReference type="InterPro" id="IPR001247">
    <property type="entry name" value="ExoRNase_PH_dom1"/>
</dbReference>
<dbReference type="InterPro" id="IPR015847">
    <property type="entry name" value="ExoRNase_PH_dom2"/>
</dbReference>
<dbReference type="InterPro" id="IPR036345">
    <property type="entry name" value="ExoRNase_PH_dom2_sf"/>
</dbReference>
<dbReference type="InterPro" id="IPR004087">
    <property type="entry name" value="KH_dom"/>
</dbReference>
<dbReference type="InterPro" id="IPR004088">
    <property type="entry name" value="KH_dom_type_1"/>
</dbReference>
<dbReference type="InterPro" id="IPR036612">
    <property type="entry name" value="KH_dom_type_1_sf"/>
</dbReference>
<dbReference type="InterPro" id="IPR012340">
    <property type="entry name" value="NA-bd_OB-fold"/>
</dbReference>
<dbReference type="InterPro" id="IPR012162">
    <property type="entry name" value="PNPase"/>
</dbReference>
<dbReference type="InterPro" id="IPR027408">
    <property type="entry name" value="PNPase/RNase_PH_dom_sf"/>
</dbReference>
<dbReference type="InterPro" id="IPR015848">
    <property type="entry name" value="PNPase_PH_RNA-bd_bac/org-type"/>
</dbReference>
<dbReference type="InterPro" id="IPR036456">
    <property type="entry name" value="PNPase_PH_RNA-bd_sf"/>
</dbReference>
<dbReference type="InterPro" id="IPR020568">
    <property type="entry name" value="Ribosomal_Su5_D2-typ_SF"/>
</dbReference>
<dbReference type="InterPro" id="IPR003029">
    <property type="entry name" value="S1_domain"/>
</dbReference>
<dbReference type="NCBIfam" id="TIGR03591">
    <property type="entry name" value="polynuc_phos"/>
    <property type="match status" value="1"/>
</dbReference>
<dbReference type="NCBIfam" id="NF008805">
    <property type="entry name" value="PRK11824.1"/>
    <property type="match status" value="1"/>
</dbReference>
<dbReference type="PANTHER" id="PTHR11252">
    <property type="entry name" value="POLYRIBONUCLEOTIDE NUCLEOTIDYLTRANSFERASE"/>
    <property type="match status" value="1"/>
</dbReference>
<dbReference type="PANTHER" id="PTHR11252:SF0">
    <property type="entry name" value="POLYRIBONUCLEOTIDE NUCLEOTIDYLTRANSFERASE 1, MITOCHONDRIAL"/>
    <property type="match status" value="1"/>
</dbReference>
<dbReference type="Pfam" id="PF00013">
    <property type="entry name" value="KH_1"/>
    <property type="match status" value="1"/>
</dbReference>
<dbReference type="Pfam" id="PF03726">
    <property type="entry name" value="PNPase"/>
    <property type="match status" value="1"/>
</dbReference>
<dbReference type="Pfam" id="PF01138">
    <property type="entry name" value="RNase_PH"/>
    <property type="match status" value="2"/>
</dbReference>
<dbReference type="Pfam" id="PF03725">
    <property type="entry name" value="RNase_PH_C"/>
    <property type="match status" value="2"/>
</dbReference>
<dbReference type="Pfam" id="PF00575">
    <property type="entry name" value="S1"/>
    <property type="match status" value="1"/>
</dbReference>
<dbReference type="PIRSF" id="PIRSF005499">
    <property type="entry name" value="PNPase"/>
    <property type="match status" value="1"/>
</dbReference>
<dbReference type="SMART" id="SM00322">
    <property type="entry name" value="KH"/>
    <property type="match status" value="1"/>
</dbReference>
<dbReference type="SMART" id="SM00316">
    <property type="entry name" value="S1"/>
    <property type="match status" value="1"/>
</dbReference>
<dbReference type="SUPFAM" id="SSF54791">
    <property type="entry name" value="Eukaryotic type KH-domain (KH-domain type I)"/>
    <property type="match status" value="1"/>
</dbReference>
<dbReference type="SUPFAM" id="SSF50249">
    <property type="entry name" value="Nucleic acid-binding proteins"/>
    <property type="match status" value="1"/>
</dbReference>
<dbReference type="SUPFAM" id="SSF46915">
    <property type="entry name" value="Polynucleotide phosphorylase/guanosine pentaphosphate synthase (PNPase/GPSI), domain 3"/>
    <property type="match status" value="1"/>
</dbReference>
<dbReference type="SUPFAM" id="SSF55666">
    <property type="entry name" value="Ribonuclease PH domain 2-like"/>
    <property type="match status" value="2"/>
</dbReference>
<dbReference type="SUPFAM" id="SSF54211">
    <property type="entry name" value="Ribosomal protein S5 domain 2-like"/>
    <property type="match status" value="2"/>
</dbReference>
<dbReference type="PROSITE" id="PS50084">
    <property type="entry name" value="KH_TYPE_1"/>
    <property type="match status" value="1"/>
</dbReference>
<dbReference type="PROSITE" id="PS50126">
    <property type="entry name" value="S1"/>
    <property type="match status" value="1"/>
</dbReference>
<protein>
    <recommendedName>
        <fullName evidence="1">Polyribonucleotide nucleotidyltransferase</fullName>
        <ecNumber evidence="1">2.7.7.8</ecNumber>
    </recommendedName>
    <alternativeName>
        <fullName evidence="1">Polynucleotide phosphorylase</fullName>
        <shortName evidence="1">PNPase</shortName>
    </alternativeName>
</protein>
<comment type="function">
    <text evidence="1">Involved in mRNA degradation. Catalyzes the phosphorolysis of single-stranded polyribonucleotides processively in the 3'- to 5'-direction.</text>
</comment>
<comment type="catalytic activity">
    <reaction evidence="1">
        <text>RNA(n+1) + phosphate = RNA(n) + a ribonucleoside 5'-diphosphate</text>
        <dbReference type="Rhea" id="RHEA:22096"/>
        <dbReference type="Rhea" id="RHEA-COMP:14527"/>
        <dbReference type="Rhea" id="RHEA-COMP:17342"/>
        <dbReference type="ChEBI" id="CHEBI:43474"/>
        <dbReference type="ChEBI" id="CHEBI:57930"/>
        <dbReference type="ChEBI" id="CHEBI:140395"/>
        <dbReference type="EC" id="2.7.7.8"/>
    </reaction>
</comment>
<comment type="cofactor">
    <cofactor evidence="1">
        <name>Mg(2+)</name>
        <dbReference type="ChEBI" id="CHEBI:18420"/>
    </cofactor>
</comment>
<comment type="subunit">
    <text evidence="1">Component of the RNA degradosome, which is a multiprotein complex involved in RNA processing and mRNA degradation.</text>
</comment>
<comment type="subcellular location">
    <subcellularLocation>
        <location evidence="1">Cytoplasm</location>
    </subcellularLocation>
</comment>
<comment type="similarity">
    <text evidence="1">Belongs to the polyribonucleotide nucleotidyltransferase family.</text>
</comment>
<sequence>MNPIVKQFKYGQHTVTLETGAIARQATAAVMASMDDTTVFVSVVAKKDVKEGQDFFPLTVDYQERTYAAGKIPGGFFKREGRPSEGETLIARLIDRPIRPLFPEGFLNEIQIIATVVSVNPQISPDLVAMIGASAALSLSGVPFNGPIGAARVGFINDQFVLNPTMAEQKQSRLDLVVAGTDKAVLMVESEADILTEEQMLAAVVFGHQQQQVVVEAIKEFVAEAGKPRWDWVAPEPDSALISKVKAIAENRLGDAYRITEKQVRYEQIDAIKADVIAQITAEDEEVSEGKIVDIFTALESQIVRGRIIAGEPRIDGRTVDTVRALDICTGVLPRTHGSAIFTRGETQSLAVVTLGTERDAQILDELTGERQDTFLFHYNFPPYSVGETGRVGSPKRREIGHGRLAKRGVAAVMPSISEFPYVVRVVSEITESNGSSSMASVCGASLALMDAGVPVKSAVAGIAMGLVKEDDKFVVLSDILGDEDHLGDMDFKVAGTRTGVTALQMDIKIEGITPEIMQIALNQAKSARMHILGVMEQAISAPRAEISEFAPRIYTMKIDPKKIKDVIGKGGATIRALTEETGTSIDIDDDGTVKIAAVDGNAVKTVMARIEDITAEVEAGAVYTGKVTRLADFGAFVAIVGNKEGLVHISQIAEERVEKVSDYLQVGQEVQVKVVEIDRQGRIRLTMRDLGSKEESQELSVEQ</sequence>
<feature type="chain" id="PRO_0000329707" description="Polyribonucleotide nucleotidyltransferase">
    <location>
        <begin position="1"/>
        <end position="704"/>
    </location>
</feature>
<feature type="domain" description="KH" evidence="1">
    <location>
        <begin position="552"/>
        <end position="611"/>
    </location>
</feature>
<feature type="domain" description="S1 motif" evidence="1">
    <location>
        <begin position="621"/>
        <end position="689"/>
    </location>
</feature>
<feature type="binding site" evidence="1">
    <location>
        <position position="485"/>
    </location>
    <ligand>
        <name>Mg(2+)</name>
        <dbReference type="ChEBI" id="CHEBI:18420"/>
    </ligand>
</feature>
<feature type="binding site" evidence="1">
    <location>
        <position position="491"/>
    </location>
    <ligand>
        <name>Mg(2+)</name>
        <dbReference type="ChEBI" id="CHEBI:18420"/>
    </ligand>
</feature>
<accession>Q65VB0</accession>
<organism>
    <name type="scientific">Mannheimia succiniciproducens (strain KCTC 0769BP / MBEL55E)</name>
    <dbReference type="NCBI Taxonomy" id="221988"/>
    <lineage>
        <taxon>Bacteria</taxon>
        <taxon>Pseudomonadati</taxon>
        <taxon>Pseudomonadota</taxon>
        <taxon>Gammaproteobacteria</taxon>
        <taxon>Pasteurellales</taxon>
        <taxon>Pasteurellaceae</taxon>
        <taxon>Basfia</taxon>
    </lineage>
</organism>